<comment type="similarity">
    <text evidence="1">Belongs to the UPF0254 family.</text>
</comment>
<protein>
    <recommendedName>
        <fullName>UPF0254 protein MTH1148 homolog</fullName>
    </recommendedName>
</protein>
<reference key="1">
    <citation type="journal article" date="1995" name="J. Bacteriol.">
        <title>Organization and growth phase-dependent transcription of methane genes in two regions of the Methanobacterium thermoautotrophicum genome.</title>
        <authorList>
            <person name="Noelling J."/>
            <person name="Pihl T.D."/>
            <person name="Vriesema A."/>
            <person name="Reeve J.N."/>
        </authorList>
    </citation>
    <scope>NUCLEOTIDE SEQUENCE [GENOMIC DNA]</scope>
</reference>
<proteinExistence type="inferred from homology"/>
<feature type="chain" id="PRO_0000147370" description="UPF0254 protein MTH1148 homolog">
    <location>
        <begin position="1"/>
        <end position="162"/>
    </location>
</feature>
<evidence type="ECO:0000305" key="1"/>
<dbReference type="EMBL" id="U19364">
    <property type="protein sequence ID" value="AAA87432.1"/>
    <property type="molecule type" value="Genomic_DNA"/>
</dbReference>
<dbReference type="SMR" id="Q50521"/>
<dbReference type="HAMAP" id="MF_00673">
    <property type="entry name" value="UPF0254"/>
    <property type="match status" value="1"/>
</dbReference>
<dbReference type="InterPro" id="IPR009625">
    <property type="entry name" value="HcgF"/>
</dbReference>
<dbReference type="NCBIfam" id="NF002122">
    <property type="entry name" value="PRK00962.1"/>
    <property type="match status" value="1"/>
</dbReference>
<dbReference type="Pfam" id="PF06787">
    <property type="entry name" value="HcgF"/>
    <property type="match status" value="1"/>
</dbReference>
<dbReference type="PIRSF" id="PIRSF018786">
    <property type="entry name" value="UPF0254"/>
    <property type="match status" value="1"/>
</dbReference>
<accession>Q50521</accession>
<organism>
    <name type="scientific">Methanothermobacter thermautotrophicus (strain Winter)</name>
    <name type="common">Methanobacterium thermoautotrophicum</name>
    <dbReference type="NCBI Taxonomy" id="79930"/>
    <lineage>
        <taxon>Archaea</taxon>
        <taxon>Methanobacteriati</taxon>
        <taxon>Methanobacteriota</taxon>
        <taxon>Methanomada group</taxon>
        <taxon>Methanobacteria</taxon>
        <taxon>Methanobacteriales</taxon>
        <taxon>Methanobacteriaceae</taxon>
        <taxon>Methanothermobacter</taxon>
    </lineage>
</organism>
<sequence length="162" mass="18076">MIRVATAECFTHGKVAREIHAFSMGYPLNYNWKISAELVLVAGLFIPTLSGVRNILGFEPPMPRATINDIKVYGEEEDEEVALMMARAVRELADSDIGIGTTAGIGRGGIAIASRDRWDVINSEVHADLRYPDTERILERQKSGIQRALQLLESFIVDFKDR</sequence>
<name>YB48_METTW</name>